<name>Y532_ALKMQ</name>
<reference key="1">
    <citation type="journal article" date="2016" name="Genome Announc.">
        <title>Complete genome sequence of Alkaliphilus metalliredigens strain QYMF, an alkaliphilic and metal-reducing bacterium isolated from borax-contaminated leachate ponds.</title>
        <authorList>
            <person name="Hwang C."/>
            <person name="Copeland A."/>
            <person name="Lucas S."/>
            <person name="Lapidus A."/>
            <person name="Barry K."/>
            <person name="Detter J.C."/>
            <person name="Glavina Del Rio T."/>
            <person name="Hammon N."/>
            <person name="Israni S."/>
            <person name="Dalin E."/>
            <person name="Tice H."/>
            <person name="Pitluck S."/>
            <person name="Chertkov O."/>
            <person name="Brettin T."/>
            <person name="Bruce D."/>
            <person name="Han C."/>
            <person name="Schmutz J."/>
            <person name="Larimer F."/>
            <person name="Land M.L."/>
            <person name="Hauser L."/>
            <person name="Kyrpides N."/>
            <person name="Mikhailova N."/>
            <person name="Ye Q."/>
            <person name="Zhou J."/>
            <person name="Richardson P."/>
            <person name="Fields M.W."/>
        </authorList>
    </citation>
    <scope>NUCLEOTIDE SEQUENCE [LARGE SCALE GENOMIC DNA]</scope>
    <source>
        <strain>QYMF</strain>
    </source>
</reference>
<evidence type="ECO:0000255" key="1">
    <source>
        <dbReference type="HAMAP-Rule" id="MF_00338"/>
    </source>
</evidence>
<protein>
    <recommendedName>
        <fullName evidence="1">UPF0145 protein Amet_0532</fullName>
    </recommendedName>
</protein>
<accession>A6TKP1</accession>
<comment type="similarity">
    <text evidence="1">Belongs to the UPF0145 family.</text>
</comment>
<proteinExistence type="inferred from homology"/>
<keyword id="KW-1185">Reference proteome</keyword>
<organism>
    <name type="scientific">Alkaliphilus metalliredigens (strain QYMF)</name>
    <dbReference type="NCBI Taxonomy" id="293826"/>
    <lineage>
        <taxon>Bacteria</taxon>
        <taxon>Bacillati</taxon>
        <taxon>Bacillota</taxon>
        <taxon>Clostridia</taxon>
        <taxon>Peptostreptococcales</taxon>
        <taxon>Natronincolaceae</taxon>
        <taxon>Alkaliphilus</taxon>
    </lineage>
</organism>
<dbReference type="EMBL" id="CP000724">
    <property type="protein sequence ID" value="ABR46759.1"/>
    <property type="molecule type" value="Genomic_DNA"/>
</dbReference>
<dbReference type="RefSeq" id="WP_011971667.1">
    <property type="nucleotide sequence ID" value="NC_009633.1"/>
</dbReference>
<dbReference type="SMR" id="A6TKP1"/>
<dbReference type="STRING" id="293826.Amet_0532"/>
<dbReference type="KEGG" id="amt:Amet_0532"/>
<dbReference type="eggNOG" id="COG0393">
    <property type="taxonomic scope" value="Bacteria"/>
</dbReference>
<dbReference type="HOGENOM" id="CLU_117144_1_2_9"/>
<dbReference type="OrthoDB" id="9796448at2"/>
<dbReference type="Proteomes" id="UP000001572">
    <property type="component" value="Chromosome"/>
</dbReference>
<dbReference type="Gene3D" id="3.30.110.70">
    <property type="entry name" value="Hypothetical protein apc22750. Chain B"/>
    <property type="match status" value="1"/>
</dbReference>
<dbReference type="HAMAP" id="MF_00338">
    <property type="entry name" value="UPF0145"/>
    <property type="match status" value="1"/>
</dbReference>
<dbReference type="InterPro" id="IPR035439">
    <property type="entry name" value="UPF0145_dom_sf"/>
</dbReference>
<dbReference type="InterPro" id="IPR002765">
    <property type="entry name" value="UPF0145_YbjQ-like"/>
</dbReference>
<dbReference type="PANTHER" id="PTHR34068:SF2">
    <property type="entry name" value="UPF0145 PROTEIN SCO3412"/>
    <property type="match status" value="1"/>
</dbReference>
<dbReference type="PANTHER" id="PTHR34068">
    <property type="entry name" value="UPF0145 PROTEIN YBJQ"/>
    <property type="match status" value="1"/>
</dbReference>
<dbReference type="Pfam" id="PF01906">
    <property type="entry name" value="YbjQ_1"/>
    <property type="match status" value="1"/>
</dbReference>
<dbReference type="SUPFAM" id="SSF117782">
    <property type="entry name" value="YbjQ-like"/>
    <property type="match status" value="1"/>
</dbReference>
<gene>
    <name type="ordered locus">Amet_0532</name>
</gene>
<sequence length="103" mass="10946">MILVNTDYISKKELETLTIVKGSTIQSKHLGKDILSGFKTLVGGELTAYSDMMNEARAIATKRMVAEAQGVGADAIINIRYASSAVMGGAAEIMVYGTAVKFV</sequence>
<feature type="chain" id="PRO_1000059727" description="UPF0145 protein Amet_0532">
    <location>
        <begin position="1"/>
        <end position="103"/>
    </location>
</feature>